<gene>
    <name type="primary">MF(ALPHA)2</name>
    <name type="synonym">MF-ALPHA-2</name>
    <name type="synonym">MFAL2</name>
    <name type="ordered locus">YGL089C</name>
</gene>
<name>MFAL2_YEAST</name>
<sequence length="120" mass="13271">MKFISTFLTFILAAVSVTASSDEDIAQVPAEAIIGYLDFGGDHDIAFLPFSNATASGLLFINTTIAEAAEKEQNTTLAKREAVADAWHWLNLRPGQPMYKREANADAWHWLQLKPGQPMY</sequence>
<reference key="1">
    <citation type="journal article" date="1983" name="Nucleic Acids Res.">
        <title>Saccharomyces cerevisiae contains two discrete genes coding for the alpha-factor pheromone.</title>
        <authorList>
            <person name="Singh A."/>
            <person name="Chen E.Y."/>
            <person name="Lugovoy J.M."/>
            <person name="Chang C.N."/>
            <person name="Hitzeman R.A."/>
            <person name="Seeburg P.H."/>
        </authorList>
    </citation>
    <scope>NUCLEOTIDE SEQUENCE [GENOMIC DNA]</scope>
</reference>
<reference key="2">
    <citation type="journal article" date="1997" name="Yeast">
        <title>Sequence analysis of 203 kilobases from Saccharomyces cerevisiae chromosome VII.</title>
        <authorList>
            <person name="Rieger M."/>
            <person name="Brueckner M."/>
            <person name="Schaefer M."/>
            <person name="Mueller-Auer S."/>
        </authorList>
    </citation>
    <scope>NUCLEOTIDE SEQUENCE [GENOMIC DNA]</scope>
    <source>
        <strain>ATCC 204508 / S288c</strain>
    </source>
</reference>
<reference key="3">
    <citation type="journal article" date="1997" name="Nature">
        <title>The nucleotide sequence of Saccharomyces cerevisiae chromosome VII.</title>
        <authorList>
            <person name="Tettelin H."/>
            <person name="Agostoni-Carbone M.L."/>
            <person name="Albermann K."/>
            <person name="Albers M."/>
            <person name="Arroyo J."/>
            <person name="Backes U."/>
            <person name="Barreiros T."/>
            <person name="Bertani I."/>
            <person name="Bjourson A.J."/>
            <person name="Brueckner M."/>
            <person name="Bruschi C.V."/>
            <person name="Carignani G."/>
            <person name="Castagnoli L."/>
            <person name="Cerdan E."/>
            <person name="Clemente M.L."/>
            <person name="Coblenz A."/>
            <person name="Coglievina M."/>
            <person name="Coissac E."/>
            <person name="Defoor E."/>
            <person name="Del Bino S."/>
            <person name="Delius H."/>
            <person name="Delneri D."/>
            <person name="de Wergifosse P."/>
            <person name="Dujon B."/>
            <person name="Durand P."/>
            <person name="Entian K.-D."/>
            <person name="Eraso P."/>
            <person name="Escribano V."/>
            <person name="Fabiani L."/>
            <person name="Fartmann B."/>
            <person name="Feroli F."/>
            <person name="Feuermann M."/>
            <person name="Frontali L."/>
            <person name="Garcia-Gonzalez M."/>
            <person name="Garcia-Saez M.I."/>
            <person name="Goffeau A."/>
            <person name="Guerreiro P."/>
            <person name="Hani J."/>
            <person name="Hansen M."/>
            <person name="Hebling U."/>
            <person name="Hernandez K."/>
            <person name="Heumann K."/>
            <person name="Hilger F."/>
            <person name="Hofmann B."/>
            <person name="Indge K.J."/>
            <person name="James C.M."/>
            <person name="Klima R."/>
            <person name="Koetter P."/>
            <person name="Kramer B."/>
            <person name="Kramer W."/>
            <person name="Lauquin G."/>
            <person name="Leuther H."/>
            <person name="Louis E.J."/>
            <person name="Maillier E."/>
            <person name="Marconi A."/>
            <person name="Martegani E."/>
            <person name="Mazon M.J."/>
            <person name="Mazzoni C."/>
            <person name="McReynolds A.D.K."/>
            <person name="Melchioretto P."/>
            <person name="Mewes H.-W."/>
            <person name="Minenkova O."/>
            <person name="Mueller-Auer S."/>
            <person name="Nawrocki A."/>
            <person name="Netter P."/>
            <person name="Neu R."/>
            <person name="Nombela C."/>
            <person name="Oliver S.G."/>
            <person name="Panzeri L."/>
            <person name="Paoluzi S."/>
            <person name="Plevani P."/>
            <person name="Portetelle D."/>
            <person name="Portillo F."/>
            <person name="Potier S."/>
            <person name="Purnelle B."/>
            <person name="Rieger M."/>
            <person name="Riles L."/>
            <person name="Rinaldi T."/>
            <person name="Robben J."/>
            <person name="Rodrigues-Pousada C."/>
            <person name="Rodriguez-Belmonte E."/>
            <person name="Rodriguez-Torres A.M."/>
            <person name="Rose M."/>
            <person name="Ruzzi M."/>
            <person name="Saliola M."/>
            <person name="Sanchez-Perez M."/>
            <person name="Schaefer B."/>
            <person name="Schaefer M."/>
            <person name="Scharfe M."/>
            <person name="Schmidheini T."/>
            <person name="Schreer A."/>
            <person name="Skala J."/>
            <person name="Souciet J.-L."/>
            <person name="Steensma H.Y."/>
            <person name="Talla E."/>
            <person name="Thierry A."/>
            <person name="Vandenbol M."/>
            <person name="van der Aart Q.J.M."/>
            <person name="Van Dyck L."/>
            <person name="Vanoni M."/>
            <person name="Verhasselt P."/>
            <person name="Voet M."/>
            <person name="Volckaert G."/>
            <person name="Wambutt R."/>
            <person name="Watson M.D."/>
            <person name="Weber N."/>
            <person name="Wedler E."/>
            <person name="Wedler H."/>
            <person name="Wipfli P."/>
            <person name="Wolf K."/>
            <person name="Wright L.F."/>
            <person name="Zaccaria P."/>
            <person name="Zimmermann M."/>
            <person name="Zollner A."/>
            <person name="Kleine K."/>
        </authorList>
    </citation>
    <scope>NUCLEOTIDE SEQUENCE [LARGE SCALE GENOMIC DNA]</scope>
    <source>
        <strain>ATCC 204508 / S288c</strain>
    </source>
</reference>
<reference key="4">
    <citation type="journal article" date="2014" name="G3 (Bethesda)">
        <title>The reference genome sequence of Saccharomyces cerevisiae: Then and now.</title>
        <authorList>
            <person name="Engel S.R."/>
            <person name="Dietrich F.S."/>
            <person name="Fisk D.G."/>
            <person name="Binkley G."/>
            <person name="Balakrishnan R."/>
            <person name="Costanzo M.C."/>
            <person name="Dwight S.S."/>
            <person name="Hitz B.C."/>
            <person name="Karra K."/>
            <person name="Nash R.S."/>
            <person name="Weng S."/>
            <person name="Wong E.D."/>
            <person name="Lloyd P."/>
            <person name="Skrzypek M.S."/>
            <person name="Miyasato S.R."/>
            <person name="Simison M."/>
            <person name="Cherry J.M."/>
        </authorList>
    </citation>
    <scope>GENOME REANNOTATION</scope>
    <source>
        <strain>ATCC 204508 / S288c</strain>
    </source>
</reference>
<reference key="5">
    <citation type="journal article" date="1976" name="Eur. J. Biochem.">
        <title>Primary structure of alpha-factor peptides from Saccharomyces cerevisiae.</title>
        <authorList>
            <person name="Stoetzler D."/>
            <person name="Kiltz H.-H."/>
            <person name="Duntze W."/>
        </authorList>
    </citation>
    <scope>PROTEIN SEQUENCE OF THE ACTIVE FACTOR</scope>
</reference>
<reference key="6">
    <citation type="journal article" date="1977" name="J. Biochem.">
        <title>Purification and amino acid sequence of mating factor from Saccharomyces cerevisiae.</title>
        <authorList>
            <person name="Tanaka T."/>
            <person name="Kita H."/>
            <person name="Murakami T."/>
            <person name="Narita K."/>
        </authorList>
    </citation>
    <scope>PROTEIN SEQUENCE OF THE ACTIVE FACTOR</scope>
</reference>
<keyword id="KW-0165">Cleavage on pair of basic residues</keyword>
<keyword id="KW-0903">Direct protein sequencing</keyword>
<keyword id="KW-0588">Pheromone</keyword>
<keyword id="KW-1185">Reference proteome</keyword>
<keyword id="KW-0677">Repeat</keyword>
<keyword id="KW-0732">Signal</keyword>
<dbReference type="EMBL" id="X01582">
    <property type="protein sequence ID" value="CAA25739.1"/>
    <property type="molecule type" value="Genomic_DNA"/>
</dbReference>
<dbReference type="EMBL" id="X01582">
    <property type="protein sequence ID" value="CAA25740.1"/>
    <property type="status" value="ALT_SEQ"/>
    <property type="molecule type" value="Genomic_DNA"/>
</dbReference>
<dbReference type="EMBL" id="X01582">
    <property type="protein sequence ID" value="CAA25741.1"/>
    <property type="status" value="ALT_SEQ"/>
    <property type="molecule type" value="Genomic_DNA"/>
</dbReference>
<dbReference type="EMBL" id="Z72611">
    <property type="protein sequence ID" value="CAA96795.1"/>
    <property type="molecule type" value="Genomic_DNA"/>
</dbReference>
<dbReference type="EMBL" id="BK006941">
    <property type="protein sequence ID" value="DAA08017.1"/>
    <property type="molecule type" value="Genomic_DNA"/>
</dbReference>
<dbReference type="PIR" id="S05791">
    <property type="entry name" value="S05791"/>
</dbReference>
<dbReference type="RefSeq" id="NP_011426.1">
    <property type="nucleotide sequence ID" value="NM_001180954.1"/>
</dbReference>
<dbReference type="BioGRID" id="33162">
    <property type="interactions" value="16"/>
</dbReference>
<dbReference type="FunCoup" id="P32435">
    <property type="interactions" value="163"/>
</dbReference>
<dbReference type="STRING" id="4932.YGL089C"/>
<dbReference type="iPTMnet" id="P32435"/>
<dbReference type="PaxDb" id="4932-YGL089C"/>
<dbReference type="PeptideAtlas" id="P32435"/>
<dbReference type="EnsemblFungi" id="YGL089C_mRNA">
    <property type="protein sequence ID" value="YGL089C"/>
    <property type="gene ID" value="YGL089C"/>
</dbReference>
<dbReference type="GeneID" id="852791"/>
<dbReference type="KEGG" id="sce:YGL089C"/>
<dbReference type="AGR" id="SGD:S000003057"/>
<dbReference type="SGD" id="S000003057">
    <property type="gene designation" value="MF(ALPHA)2"/>
</dbReference>
<dbReference type="VEuPathDB" id="FungiDB:YGL089C"/>
<dbReference type="eggNOG" id="ENOG502S0T3">
    <property type="taxonomic scope" value="Eukaryota"/>
</dbReference>
<dbReference type="GeneTree" id="ENSGT00940000176792"/>
<dbReference type="HOGENOM" id="CLU_136956_0_0_1"/>
<dbReference type="InParanoid" id="P32435"/>
<dbReference type="OMA" id="WHWLRFN"/>
<dbReference type="OrthoDB" id="3766782at2759"/>
<dbReference type="BioCyc" id="YEAST:G3O-34080-MONOMER"/>
<dbReference type="BioGRID-ORCS" id="852791">
    <property type="hits" value="0 hits in 10 CRISPR screens"/>
</dbReference>
<dbReference type="PRO" id="PR:P32435"/>
<dbReference type="Proteomes" id="UP000002311">
    <property type="component" value="Chromosome VII"/>
</dbReference>
<dbReference type="RNAct" id="P32435">
    <property type="molecule type" value="protein"/>
</dbReference>
<dbReference type="GO" id="GO:0005576">
    <property type="term" value="C:extracellular region"/>
    <property type="evidence" value="ECO:0000304"/>
    <property type="project" value="SGD"/>
</dbReference>
<dbReference type="GO" id="GO:0000324">
    <property type="term" value="C:fungal-type vacuole"/>
    <property type="evidence" value="ECO:0007005"/>
    <property type="project" value="SGD"/>
</dbReference>
<dbReference type="GO" id="GO:1903135">
    <property type="term" value="F:cupric ion binding"/>
    <property type="evidence" value="ECO:0000314"/>
    <property type="project" value="SGD"/>
</dbReference>
<dbReference type="GO" id="GO:0000772">
    <property type="term" value="F:mating pheromone activity"/>
    <property type="evidence" value="ECO:0000314"/>
    <property type="project" value="SGD"/>
</dbReference>
<dbReference type="GO" id="GO:0007618">
    <property type="term" value="P:mating"/>
    <property type="evidence" value="ECO:0007669"/>
    <property type="project" value="InterPro"/>
</dbReference>
<dbReference type="GO" id="GO:0000750">
    <property type="term" value="P:pheromone-dependent signal transduction involved in conjugation with cellular fusion"/>
    <property type="evidence" value="ECO:0000315"/>
    <property type="project" value="SGD"/>
</dbReference>
<dbReference type="InterPro" id="IPR016326">
    <property type="entry name" value="Mating_factor_a"/>
</dbReference>
<dbReference type="InterPro" id="IPR006742">
    <property type="entry name" value="Mating_factor_alpha_C"/>
</dbReference>
<dbReference type="InterPro" id="IPR008675">
    <property type="entry name" value="Mating_factor_alpha_N"/>
</dbReference>
<dbReference type="Pfam" id="PF04648">
    <property type="entry name" value="MF_alpha"/>
    <property type="match status" value="2"/>
</dbReference>
<dbReference type="Pfam" id="PF05436">
    <property type="entry name" value="MF_alpha_N"/>
    <property type="match status" value="1"/>
</dbReference>
<dbReference type="PIRSF" id="PIRSF001866">
    <property type="entry name" value="Mating_factor_alpha"/>
    <property type="match status" value="1"/>
</dbReference>
<feature type="signal peptide" evidence="1">
    <location>
        <begin position="1"/>
        <end position="21"/>
    </location>
</feature>
<feature type="propeptide" id="PRO_0000419677">
    <location>
        <begin position="22"/>
        <end position="86"/>
    </location>
</feature>
<feature type="peptide" id="PRO_0000021702" description="Mating factor alpha-like">
    <location>
        <begin position="87"/>
        <end position="99"/>
    </location>
</feature>
<feature type="propeptide" id="PRO_0000419678">
    <location>
        <begin position="102"/>
        <end position="107"/>
    </location>
</feature>
<feature type="peptide" id="PRO_0000021703" description="Mating factor alpha">
    <location>
        <begin position="108"/>
        <end position="120"/>
    </location>
</feature>
<accession>P32435</accession>
<accession>D6VU56</accession>
<organism>
    <name type="scientific">Saccharomyces cerevisiae (strain ATCC 204508 / S288c)</name>
    <name type="common">Baker's yeast</name>
    <dbReference type="NCBI Taxonomy" id="559292"/>
    <lineage>
        <taxon>Eukaryota</taxon>
        <taxon>Fungi</taxon>
        <taxon>Dikarya</taxon>
        <taxon>Ascomycota</taxon>
        <taxon>Saccharomycotina</taxon>
        <taxon>Saccharomycetes</taxon>
        <taxon>Saccharomycetales</taxon>
        <taxon>Saccharomycetaceae</taxon>
        <taxon>Saccharomyces</taxon>
    </lineage>
</organism>
<proteinExistence type="evidence at protein level"/>
<evidence type="ECO:0000255" key="1"/>
<comment type="function">
    <text>The active factor is excreted into the culture medium by haploid cells of the alpha mating type and acts on cells of the opposite mating type (type A). It mediates the conjugation process between the two types by inhibiting the initiation of DNA synthesis in type a cells and synchronizing them with type alpha.</text>
</comment>
<protein>
    <recommendedName>
        <fullName>Mating factor alpha-2</fullName>
    </recommendedName>
    <alternativeName>
        <fullName>Alpha-2 mating pheromone</fullName>
    </alternativeName>
    <component>
        <recommendedName>
            <fullName>Mating factor alpha</fullName>
        </recommendedName>
    </component>
    <component>
        <recommendedName>
            <fullName>Mating factor alpha-like</fullName>
        </recommendedName>
    </component>
</protein>